<proteinExistence type="evidence at transcript level"/>
<sequence>MKTLSVFLVLVCLLGLVQSWEWPWNRQPTRYPIPSPNPRDKWCRLNLGPAWGGRC</sequence>
<gene>
    <name type="primary">Acp70A</name>
    <name type="synonym">PAPB</name>
    <name type="ORF">GM25408</name>
</gene>
<feature type="signal peptide" evidence="1">
    <location>
        <begin position="1"/>
        <end position="19"/>
    </location>
</feature>
<feature type="chain" id="PRO_0000020588" description="Accessory gland-specific peptide 70A">
    <location>
        <begin position="20"/>
        <end position="55"/>
    </location>
</feature>
<feature type="modified residue" description="Hydroxyproline" evidence="1">
    <location>
        <position position="28"/>
    </location>
</feature>
<feature type="modified residue" description="Hydroxyproline" evidence="1">
    <location>
        <position position="32"/>
    </location>
</feature>
<feature type="modified residue" description="Hydroxyproline" evidence="1">
    <location>
        <position position="34"/>
    </location>
</feature>
<feature type="modified residue" description="Hydroxyproline" evidence="1">
    <location>
        <position position="38"/>
    </location>
</feature>
<feature type="disulfide bond" evidence="1">
    <location>
        <begin position="43"/>
        <end position="55"/>
    </location>
</feature>
<organism>
    <name type="scientific">Drosophila sechellia</name>
    <name type="common">Fruit fly</name>
    <dbReference type="NCBI Taxonomy" id="7238"/>
    <lineage>
        <taxon>Eukaryota</taxon>
        <taxon>Metazoa</taxon>
        <taxon>Ecdysozoa</taxon>
        <taxon>Arthropoda</taxon>
        <taxon>Hexapoda</taxon>
        <taxon>Insecta</taxon>
        <taxon>Pterygota</taxon>
        <taxon>Neoptera</taxon>
        <taxon>Endopterygota</taxon>
        <taxon>Diptera</taxon>
        <taxon>Brachycera</taxon>
        <taxon>Muscomorpha</taxon>
        <taxon>Ephydroidea</taxon>
        <taxon>Drosophilidae</taxon>
        <taxon>Drosophila</taxon>
        <taxon>Sophophora</taxon>
    </lineage>
</organism>
<evidence type="ECO:0000250" key="1"/>
<comment type="function">
    <text>Represses female sexual receptivity and stimulates oviposition.</text>
</comment>
<comment type="subcellular location">
    <subcellularLocation>
        <location>Secreted</location>
    </subcellularLocation>
</comment>
<comment type="tissue specificity">
    <text>Main cells of the accessory glands of males (paragonial gland).</text>
</comment>
<accession>O18417</accession>
<accession>B4HGQ9</accession>
<dbReference type="EMBL" id="X99414">
    <property type="protein sequence ID" value="CAA67791.1"/>
    <property type="molecule type" value="Genomic_DNA"/>
</dbReference>
<dbReference type="EMBL" id="CH480815">
    <property type="protein sequence ID" value="EDW41367.1"/>
    <property type="molecule type" value="Genomic_DNA"/>
</dbReference>
<dbReference type="SMR" id="O18417"/>
<dbReference type="STRING" id="7238.O18417"/>
<dbReference type="EnsemblMetazoa" id="FBtr0208393">
    <property type="protein sequence ID" value="FBpp0206885"/>
    <property type="gene ID" value="FBgn0012779"/>
</dbReference>
<dbReference type="EnsemblMetazoa" id="XM_002030345.2">
    <property type="protein sequence ID" value="XP_002030381.1"/>
    <property type="gene ID" value="LOC6605559"/>
</dbReference>
<dbReference type="GeneID" id="6605559"/>
<dbReference type="KEGG" id="dse:6605559"/>
<dbReference type="HOGENOM" id="CLU_3034552_0_0_1"/>
<dbReference type="OMA" id="PRDKWCR"/>
<dbReference type="OrthoDB" id="39670at7215"/>
<dbReference type="PhylomeDB" id="O18417"/>
<dbReference type="Proteomes" id="UP000001292">
    <property type="component" value="Unassembled WGS sequence"/>
</dbReference>
<dbReference type="GO" id="GO:0005576">
    <property type="term" value="C:extracellular region"/>
    <property type="evidence" value="ECO:0007669"/>
    <property type="project" value="UniProtKB-SubCell"/>
</dbReference>
<dbReference type="GO" id="GO:0005179">
    <property type="term" value="F:hormone activity"/>
    <property type="evidence" value="ECO:0007669"/>
    <property type="project" value="InterPro"/>
</dbReference>
<dbReference type="GO" id="GO:0046008">
    <property type="term" value="P:regulation of female receptivity, post-mating"/>
    <property type="evidence" value="ECO:0007669"/>
    <property type="project" value="InterPro"/>
</dbReference>
<dbReference type="InterPro" id="IPR012608">
    <property type="entry name" value="Sex_peptide"/>
</dbReference>
<dbReference type="Pfam" id="PF08138">
    <property type="entry name" value="Sex_peptide"/>
    <property type="match status" value="1"/>
</dbReference>
<reference key="1">
    <citation type="journal article" date="1997" name="Genetics">
        <title>Evolutionary history of the sex-peptide (Acp70A) gene region in Drosophila melanogaster.</title>
        <authorList>
            <person name="Cirera S."/>
            <person name="Aguade M.N."/>
        </authorList>
    </citation>
    <scope>NUCLEOTIDE SEQUENCE [GENOMIC DNA]</scope>
</reference>
<reference key="2">
    <citation type="journal article" date="2007" name="Nature">
        <title>Evolution of genes and genomes on the Drosophila phylogeny.</title>
        <authorList>
            <consortium name="Drosophila 12 genomes consortium"/>
        </authorList>
    </citation>
    <scope>NUCLEOTIDE SEQUENCE [LARGE SCALE GENOMIC DNA]</scope>
    <source>
        <strain>Rob3c / Tucson 14021-0248.25</strain>
    </source>
</reference>
<protein>
    <recommendedName>
        <fullName>Accessory gland-specific peptide 70A</fullName>
    </recommendedName>
    <alternativeName>
        <fullName>Paragonial peptide B</fullName>
    </alternativeName>
    <alternativeName>
        <fullName>Sex peptide</fullName>
        <shortName>SP</shortName>
    </alternativeName>
</protein>
<keyword id="KW-0085">Behavior</keyword>
<keyword id="KW-1015">Disulfide bond</keyword>
<keyword id="KW-0379">Hydroxylation</keyword>
<keyword id="KW-1185">Reference proteome</keyword>
<keyword id="KW-0964">Secreted</keyword>
<keyword id="KW-0732">Signal</keyword>
<name>A70A_DROSE</name>